<protein>
    <recommendedName>
        <fullName>Probable tautomerase jhp_0858</fullName>
        <ecNumber>5.3.2.-</ecNumber>
    </recommendedName>
</protein>
<accession>Q9ZKS7</accession>
<proteinExistence type="inferred from homology"/>
<dbReference type="EC" id="5.3.2.-"/>
<dbReference type="EMBL" id="AE001439">
    <property type="protein sequence ID" value="AAD06434.1"/>
    <property type="molecule type" value="Genomic_DNA"/>
</dbReference>
<dbReference type="PIR" id="B71880">
    <property type="entry name" value="B71880"/>
</dbReference>
<dbReference type="RefSeq" id="WP_001115880.1">
    <property type="nucleotide sequence ID" value="NZ_CP011330.1"/>
</dbReference>
<dbReference type="SMR" id="Q9ZKS7"/>
<dbReference type="KEGG" id="hpj:jhp_0858"/>
<dbReference type="PATRIC" id="fig|85963.30.peg.106"/>
<dbReference type="eggNOG" id="COG1942">
    <property type="taxonomic scope" value="Bacteria"/>
</dbReference>
<dbReference type="Proteomes" id="UP000000804">
    <property type="component" value="Chromosome"/>
</dbReference>
<dbReference type="GO" id="GO:0016853">
    <property type="term" value="F:isomerase activity"/>
    <property type="evidence" value="ECO:0007669"/>
    <property type="project" value="UniProtKB-KW"/>
</dbReference>
<dbReference type="CDD" id="cd00491">
    <property type="entry name" value="4Oxalocrotonate_Tautomerase"/>
    <property type="match status" value="1"/>
</dbReference>
<dbReference type="Gene3D" id="3.30.429.10">
    <property type="entry name" value="Macrophage Migration Inhibitory Factor"/>
    <property type="match status" value="1"/>
</dbReference>
<dbReference type="InterPro" id="IPR018191">
    <property type="entry name" value="4-OT"/>
</dbReference>
<dbReference type="InterPro" id="IPR004370">
    <property type="entry name" value="4-OT-like_dom"/>
</dbReference>
<dbReference type="InterPro" id="IPR014347">
    <property type="entry name" value="Tautomerase/MIF_sf"/>
</dbReference>
<dbReference type="NCBIfam" id="TIGR00013">
    <property type="entry name" value="taut"/>
    <property type="match status" value="1"/>
</dbReference>
<dbReference type="PANTHER" id="PTHR35530:SF1">
    <property type="entry name" value="2-HYDROXYMUCONATE TAUTOMERASE"/>
    <property type="match status" value="1"/>
</dbReference>
<dbReference type="PANTHER" id="PTHR35530">
    <property type="entry name" value="TAUTOMERASE-RELATED"/>
    <property type="match status" value="1"/>
</dbReference>
<dbReference type="Pfam" id="PF01361">
    <property type="entry name" value="Tautomerase"/>
    <property type="match status" value="1"/>
</dbReference>
<dbReference type="SUPFAM" id="SSF55331">
    <property type="entry name" value="Tautomerase/MIF"/>
    <property type="match status" value="1"/>
</dbReference>
<reference key="1">
    <citation type="journal article" date="1999" name="Nature">
        <title>Genomic sequence comparison of two unrelated isolates of the human gastric pathogen Helicobacter pylori.</title>
        <authorList>
            <person name="Alm R.A."/>
            <person name="Ling L.-S.L."/>
            <person name="Moir D.T."/>
            <person name="King B.L."/>
            <person name="Brown E.D."/>
            <person name="Doig P.C."/>
            <person name="Smith D.R."/>
            <person name="Noonan B."/>
            <person name="Guild B.C."/>
            <person name="deJonge B.L."/>
            <person name="Carmel G."/>
            <person name="Tummino P.J."/>
            <person name="Caruso A."/>
            <person name="Uria-Nickelsen M."/>
            <person name="Mills D.M."/>
            <person name="Ives C."/>
            <person name="Gibson R."/>
            <person name="Merberg D."/>
            <person name="Mills S.D."/>
            <person name="Jiang Q."/>
            <person name="Taylor D.E."/>
            <person name="Vovis G.F."/>
            <person name="Trust T.J."/>
        </authorList>
    </citation>
    <scope>NUCLEOTIDE SEQUENCE [LARGE SCALE GENOMIC DNA]</scope>
    <source>
        <strain>J99 / ATCC 700824</strain>
    </source>
</reference>
<keyword id="KW-0413">Isomerase</keyword>
<evidence type="ECO:0000250" key="1"/>
<evidence type="ECO:0000305" key="2"/>
<organism>
    <name type="scientific">Helicobacter pylori (strain J99 / ATCC 700824)</name>
    <name type="common">Campylobacter pylori J99</name>
    <dbReference type="NCBI Taxonomy" id="85963"/>
    <lineage>
        <taxon>Bacteria</taxon>
        <taxon>Pseudomonadati</taxon>
        <taxon>Campylobacterota</taxon>
        <taxon>Epsilonproteobacteria</taxon>
        <taxon>Campylobacterales</taxon>
        <taxon>Helicobacteraceae</taxon>
        <taxon>Helicobacter</taxon>
    </lineage>
</organism>
<sequence>MPFINIKLVPENGGPTNEQKQQLIEGVSDLMVKVLNKNKASIVVIIDEVDSNNYGLGGESIHHLRQKN</sequence>
<gene>
    <name type="ordered locus">jhp_0858</name>
</gene>
<feature type="initiator methionine" description="Removed" evidence="1">
    <location>
        <position position="1"/>
    </location>
</feature>
<feature type="chain" id="PRO_0000209530" description="Probable tautomerase jhp_0858">
    <location>
        <begin position="2"/>
        <end position="68"/>
    </location>
</feature>
<feature type="active site" description="Proton acceptor; via imino nitrogen" evidence="1">
    <location>
        <position position="2"/>
    </location>
</feature>
<name>Y858_HELPJ</name>
<comment type="similarity">
    <text evidence="2">Belongs to the 4-oxalocrotonate tautomerase family.</text>
</comment>